<proteinExistence type="inferred from homology"/>
<comment type="function">
    <text evidence="1">Involved in the regulation of the intracellular balance of NAD and NADP, and is a key enzyme in the biosynthesis of NADP. Catalyzes specifically the phosphorylation on 2'-hydroxyl of the adenosine moiety of NAD to yield NADP.</text>
</comment>
<comment type="catalytic activity">
    <reaction evidence="1">
        <text>NAD(+) + ATP = ADP + NADP(+) + H(+)</text>
        <dbReference type="Rhea" id="RHEA:18629"/>
        <dbReference type="ChEBI" id="CHEBI:15378"/>
        <dbReference type="ChEBI" id="CHEBI:30616"/>
        <dbReference type="ChEBI" id="CHEBI:57540"/>
        <dbReference type="ChEBI" id="CHEBI:58349"/>
        <dbReference type="ChEBI" id="CHEBI:456216"/>
        <dbReference type="EC" id="2.7.1.23"/>
    </reaction>
</comment>
<comment type="cofactor">
    <cofactor evidence="1">
        <name>a divalent metal cation</name>
        <dbReference type="ChEBI" id="CHEBI:60240"/>
    </cofactor>
</comment>
<comment type="subcellular location">
    <subcellularLocation>
        <location evidence="1">Cytoplasm</location>
    </subcellularLocation>
</comment>
<comment type="similarity">
    <text evidence="1">Belongs to the NAD kinase family.</text>
</comment>
<feature type="chain" id="PRO_1000133577" description="NAD kinase">
    <location>
        <begin position="1"/>
        <end position="311"/>
    </location>
</feature>
<feature type="active site" description="Proton acceptor" evidence="1">
    <location>
        <position position="89"/>
    </location>
</feature>
<feature type="binding site" evidence="1">
    <location>
        <begin position="89"/>
        <end position="90"/>
    </location>
    <ligand>
        <name>NAD(+)</name>
        <dbReference type="ChEBI" id="CHEBI:57540"/>
    </ligand>
</feature>
<feature type="binding site" evidence="1">
    <location>
        <position position="94"/>
    </location>
    <ligand>
        <name>NAD(+)</name>
        <dbReference type="ChEBI" id="CHEBI:57540"/>
    </ligand>
</feature>
<feature type="binding site" evidence="1">
    <location>
        <begin position="163"/>
        <end position="164"/>
    </location>
    <ligand>
        <name>NAD(+)</name>
        <dbReference type="ChEBI" id="CHEBI:57540"/>
    </ligand>
</feature>
<feature type="binding site" evidence="1">
    <location>
        <position position="193"/>
    </location>
    <ligand>
        <name>NAD(+)</name>
        <dbReference type="ChEBI" id="CHEBI:57540"/>
    </ligand>
</feature>
<feature type="binding site" evidence="1">
    <location>
        <begin position="204"/>
        <end position="209"/>
    </location>
    <ligand>
        <name>NAD(+)</name>
        <dbReference type="ChEBI" id="CHEBI:57540"/>
    </ligand>
</feature>
<dbReference type="EC" id="2.7.1.23" evidence="1"/>
<dbReference type="EMBL" id="FM211192">
    <property type="protein sequence ID" value="CAR71454.1"/>
    <property type="molecule type" value="Genomic_DNA"/>
</dbReference>
<dbReference type="SMR" id="B8ZRH2"/>
<dbReference type="KEGG" id="mlb:MLBr01359"/>
<dbReference type="HOGENOM" id="CLU_008831_0_0_11"/>
<dbReference type="Proteomes" id="UP000006900">
    <property type="component" value="Chromosome"/>
</dbReference>
<dbReference type="GO" id="GO:0005737">
    <property type="term" value="C:cytoplasm"/>
    <property type="evidence" value="ECO:0007669"/>
    <property type="project" value="UniProtKB-SubCell"/>
</dbReference>
<dbReference type="GO" id="GO:0005524">
    <property type="term" value="F:ATP binding"/>
    <property type="evidence" value="ECO:0007669"/>
    <property type="project" value="UniProtKB-KW"/>
</dbReference>
<dbReference type="GO" id="GO:0046872">
    <property type="term" value="F:metal ion binding"/>
    <property type="evidence" value="ECO:0007669"/>
    <property type="project" value="UniProtKB-UniRule"/>
</dbReference>
<dbReference type="GO" id="GO:0051287">
    <property type="term" value="F:NAD binding"/>
    <property type="evidence" value="ECO:0007669"/>
    <property type="project" value="UniProtKB-ARBA"/>
</dbReference>
<dbReference type="GO" id="GO:0003951">
    <property type="term" value="F:NAD+ kinase activity"/>
    <property type="evidence" value="ECO:0007669"/>
    <property type="project" value="UniProtKB-UniRule"/>
</dbReference>
<dbReference type="GO" id="GO:0019674">
    <property type="term" value="P:NAD metabolic process"/>
    <property type="evidence" value="ECO:0007669"/>
    <property type="project" value="InterPro"/>
</dbReference>
<dbReference type="GO" id="GO:0006741">
    <property type="term" value="P:NADP biosynthetic process"/>
    <property type="evidence" value="ECO:0007669"/>
    <property type="project" value="UniProtKB-UniRule"/>
</dbReference>
<dbReference type="FunFam" id="2.60.200.30:FF:000007">
    <property type="entry name" value="NAD kinase"/>
    <property type="match status" value="1"/>
</dbReference>
<dbReference type="Gene3D" id="3.40.50.10330">
    <property type="entry name" value="Probable inorganic polyphosphate/atp-NAD kinase, domain 1"/>
    <property type="match status" value="1"/>
</dbReference>
<dbReference type="Gene3D" id="2.60.200.30">
    <property type="entry name" value="Probable inorganic polyphosphate/atp-NAD kinase, domain 2"/>
    <property type="match status" value="1"/>
</dbReference>
<dbReference type="HAMAP" id="MF_00361">
    <property type="entry name" value="NAD_kinase"/>
    <property type="match status" value="1"/>
</dbReference>
<dbReference type="InterPro" id="IPR017438">
    <property type="entry name" value="ATP-NAD_kinase_N"/>
</dbReference>
<dbReference type="InterPro" id="IPR017437">
    <property type="entry name" value="ATP-NAD_kinase_PpnK-typ_C"/>
</dbReference>
<dbReference type="InterPro" id="IPR016064">
    <property type="entry name" value="NAD/diacylglycerol_kinase_sf"/>
</dbReference>
<dbReference type="InterPro" id="IPR002504">
    <property type="entry name" value="NADK"/>
</dbReference>
<dbReference type="NCBIfam" id="NF002892">
    <property type="entry name" value="PRK03372.1"/>
    <property type="match status" value="1"/>
</dbReference>
<dbReference type="PANTHER" id="PTHR20275">
    <property type="entry name" value="NAD KINASE"/>
    <property type="match status" value="1"/>
</dbReference>
<dbReference type="PANTHER" id="PTHR20275:SF0">
    <property type="entry name" value="NAD KINASE"/>
    <property type="match status" value="1"/>
</dbReference>
<dbReference type="Pfam" id="PF01513">
    <property type="entry name" value="NAD_kinase"/>
    <property type="match status" value="1"/>
</dbReference>
<dbReference type="Pfam" id="PF20143">
    <property type="entry name" value="NAD_kinase_C"/>
    <property type="match status" value="1"/>
</dbReference>
<dbReference type="SUPFAM" id="SSF111331">
    <property type="entry name" value="NAD kinase/diacylglycerol kinase-like"/>
    <property type="match status" value="1"/>
</dbReference>
<protein>
    <recommendedName>
        <fullName evidence="1">NAD kinase</fullName>
        <ecNumber evidence="1">2.7.1.23</ecNumber>
    </recommendedName>
    <alternativeName>
        <fullName evidence="1">ATP-dependent NAD kinase</fullName>
    </alternativeName>
</protein>
<accession>B8ZRH2</accession>
<organism>
    <name type="scientific">Mycobacterium leprae (strain Br4923)</name>
    <dbReference type="NCBI Taxonomy" id="561304"/>
    <lineage>
        <taxon>Bacteria</taxon>
        <taxon>Bacillati</taxon>
        <taxon>Actinomycetota</taxon>
        <taxon>Actinomycetes</taxon>
        <taxon>Mycobacteriales</taxon>
        <taxon>Mycobacteriaceae</taxon>
        <taxon>Mycobacterium</taxon>
    </lineage>
</organism>
<name>NADK_MYCLB</name>
<evidence type="ECO:0000255" key="1">
    <source>
        <dbReference type="HAMAP-Rule" id="MF_00361"/>
    </source>
</evidence>
<sequence>MTPRKAAQRTVLLVVHTGRDEATETARRVKKIVGDNGIALRVLSAEAVDRGSLHLALDNMRAMGVDIEVVDADPHVAQGCELVLVLGGDGTFLRAAELARTARIPVLGVNLGRIGFLAEAEAEAIDVVLEHVIARSYRVEERLTLDIVVRQGGNIIDQGWALNEASLEKGPRLGVLGVVVEIEGRPVSTFGCDGVLVSTPTGSTAYAFSAGGPVLWPDLEAILVVPNNAHALFGRPMVTSPDATVAIELEANGNDALVFCDGRREMIIPAGGRLEVTRCATPVKWARLDSAPFTDRLVSKFRLPVTGWRGK</sequence>
<gene>
    <name evidence="1" type="primary">nadK</name>
    <name type="ordered locus">MLBr01359</name>
</gene>
<reference key="1">
    <citation type="journal article" date="2009" name="Nat. Genet.">
        <title>Comparative genomic and phylogeographic analysis of Mycobacterium leprae.</title>
        <authorList>
            <person name="Monot M."/>
            <person name="Honore N."/>
            <person name="Garnier T."/>
            <person name="Zidane N."/>
            <person name="Sherafi D."/>
            <person name="Paniz-Mondolfi A."/>
            <person name="Matsuoka M."/>
            <person name="Taylor G.M."/>
            <person name="Donoghue H.D."/>
            <person name="Bouwman A."/>
            <person name="Mays S."/>
            <person name="Watson C."/>
            <person name="Lockwood D."/>
            <person name="Khamispour A."/>
            <person name="Dowlati Y."/>
            <person name="Jianping S."/>
            <person name="Rea T.H."/>
            <person name="Vera-Cabrera L."/>
            <person name="Stefani M.M."/>
            <person name="Banu S."/>
            <person name="Macdonald M."/>
            <person name="Sapkota B.R."/>
            <person name="Spencer J.S."/>
            <person name="Thomas J."/>
            <person name="Harshman K."/>
            <person name="Singh P."/>
            <person name="Busso P."/>
            <person name="Gattiker A."/>
            <person name="Rougemont J."/>
            <person name="Brennan P.J."/>
            <person name="Cole S.T."/>
        </authorList>
    </citation>
    <scope>NUCLEOTIDE SEQUENCE [LARGE SCALE GENOMIC DNA]</scope>
    <source>
        <strain>Br4923</strain>
    </source>
</reference>
<keyword id="KW-0067">ATP-binding</keyword>
<keyword id="KW-0963">Cytoplasm</keyword>
<keyword id="KW-0418">Kinase</keyword>
<keyword id="KW-0520">NAD</keyword>
<keyword id="KW-0521">NADP</keyword>
<keyword id="KW-0547">Nucleotide-binding</keyword>
<keyword id="KW-0808">Transferase</keyword>